<accession>Q06FP5</accession>
<organism>
    <name type="scientific">Pelargonium hortorum</name>
    <name type="common">Common geranium</name>
    <name type="synonym">Pelargonium inquinans x Pelargonium zonale</name>
    <dbReference type="NCBI Taxonomy" id="4031"/>
    <lineage>
        <taxon>Eukaryota</taxon>
        <taxon>Viridiplantae</taxon>
        <taxon>Streptophyta</taxon>
        <taxon>Embryophyta</taxon>
        <taxon>Tracheophyta</taxon>
        <taxon>Spermatophyta</taxon>
        <taxon>Magnoliopsida</taxon>
        <taxon>eudicotyledons</taxon>
        <taxon>Gunneridae</taxon>
        <taxon>Pentapetalae</taxon>
        <taxon>rosids</taxon>
        <taxon>malvids</taxon>
        <taxon>Geraniales</taxon>
        <taxon>Geraniaceae</taxon>
        <taxon>Pelargonium</taxon>
    </lineage>
</organism>
<name>RK32_PELHO</name>
<proteinExistence type="inferred from homology"/>
<sequence>MTVPKKRLSSSKKRIRKNIWKGKGHWAALKALSLGKSLSTGNSKSFFRFFSMPTRFFSMPTDNKKTKKS</sequence>
<keyword id="KW-0150">Chloroplast</keyword>
<keyword id="KW-0934">Plastid</keyword>
<keyword id="KW-0687">Ribonucleoprotein</keyword>
<keyword id="KW-0689">Ribosomal protein</keyword>
<dbReference type="EMBL" id="DQ897681">
    <property type="protein sequence ID" value="ABI17312.1"/>
    <property type="molecule type" value="Genomic_DNA"/>
</dbReference>
<dbReference type="EMBL" id="DQ897681">
    <property type="protein sequence ID" value="ABI17327.1"/>
    <property type="molecule type" value="Genomic_DNA"/>
</dbReference>
<dbReference type="SMR" id="Q06FP5"/>
<dbReference type="GO" id="GO:0009507">
    <property type="term" value="C:chloroplast"/>
    <property type="evidence" value="ECO:0007669"/>
    <property type="project" value="UniProtKB-SubCell"/>
</dbReference>
<dbReference type="GO" id="GO:0015934">
    <property type="term" value="C:large ribosomal subunit"/>
    <property type="evidence" value="ECO:0007669"/>
    <property type="project" value="InterPro"/>
</dbReference>
<dbReference type="GO" id="GO:0003735">
    <property type="term" value="F:structural constituent of ribosome"/>
    <property type="evidence" value="ECO:0007669"/>
    <property type="project" value="InterPro"/>
</dbReference>
<dbReference type="GO" id="GO:0006412">
    <property type="term" value="P:translation"/>
    <property type="evidence" value="ECO:0007669"/>
    <property type="project" value="UniProtKB-UniRule"/>
</dbReference>
<dbReference type="HAMAP" id="MF_00340">
    <property type="entry name" value="Ribosomal_bL32"/>
    <property type="match status" value="1"/>
</dbReference>
<dbReference type="InterPro" id="IPR002677">
    <property type="entry name" value="Ribosomal_bL32"/>
</dbReference>
<dbReference type="InterPro" id="IPR044958">
    <property type="entry name" value="Ribosomal_bL32_plant/cyanobact"/>
</dbReference>
<dbReference type="PANTHER" id="PTHR36083">
    <property type="entry name" value="50S RIBOSOMAL PROTEIN L32, CHLOROPLASTIC"/>
    <property type="match status" value="1"/>
</dbReference>
<dbReference type="PANTHER" id="PTHR36083:SF1">
    <property type="entry name" value="LARGE RIBOSOMAL SUBUNIT PROTEIN BL32C"/>
    <property type="match status" value="1"/>
</dbReference>
<evidence type="ECO:0000255" key="1">
    <source>
        <dbReference type="HAMAP-Rule" id="MF_00340"/>
    </source>
</evidence>
<evidence type="ECO:0000305" key="2"/>
<gene>
    <name evidence="1" type="primary">rpl32-A</name>
</gene>
<gene>
    <name evidence="1" type="primary">rpl32-B</name>
</gene>
<geneLocation type="chloroplast"/>
<feature type="chain" id="PRO_0000276482" description="Large ribosomal subunit protein bL32c">
    <location>
        <begin position="1"/>
        <end position="69"/>
    </location>
</feature>
<protein>
    <recommendedName>
        <fullName evidence="1">Large ribosomal subunit protein bL32c</fullName>
    </recommendedName>
    <alternativeName>
        <fullName evidence="2">50S ribosomal protein L32, chloroplastic</fullName>
    </alternativeName>
</protein>
<reference key="1">
    <citation type="journal article" date="2006" name="Mol. Biol. Evol.">
        <title>The complete chloroplast genome sequence of Pelargonium x hortorum: organization and evolution of the largest and most highly rearranged chloroplast genome of land plants.</title>
        <authorList>
            <person name="Chumley T.W."/>
            <person name="Palmer J.D."/>
            <person name="Mower J.P."/>
            <person name="Fourcade H.M."/>
            <person name="Calie P.J."/>
            <person name="Boore J.L."/>
            <person name="Jansen R.K."/>
        </authorList>
    </citation>
    <scope>NUCLEOTIDE SEQUENCE [LARGE SCALE GENOMIC DNA]</scope>
    <source>
        <strain>cv. Ringo White</strain>
    </source>
</reference>
<comment type="subcellular location">
    <subcellularLocation>
        <location>Plastid</location>
        <location>Chloroplast</location>
    </subcellularLocation>
</comment>
<comment type="similarity">
    <text evidence="1">Belongs to the bacterial ribosomal protein bL32 family.</text>
</comment>